<feature type="chain" id="PRO_0000065295" description="Glycosyltransferase family 92 protein F13G3.3">
    <location>
        <begin position="1"/>
        <end position="501"/>
    </location>
</feature>
<feature type="transmembrane region" description="Helical" evidence="1">
    <location>
        <begin position="10"/>
        <end position="30"/>
    </location>
</feature>
<feature type="domain" description="GT92">
    <location>
        <begin position="151"/>
        <end position="439"/>
    </location>
</feature>
<dbReference type="EC" id="2.4.1.-" evidence="2"/>
<dbReference type="EMBL" id="Z71259">
    <property type="protein sequence ID" value="CAA95788.2"/>
    <property type="molecule type" value="Genomic_DNA"/>
</dbReference>
<dbReference type="PIR" id="T20852">
    <property type="entry name" value="T20852"/>
</dbReference>
<dbReference type="RefSeq" id="NP_492062.1">
    <property type="nucleotide sequence ID" value="NM_059661.6"/>
</dbReference>
<dbReference type="SMR" id="Q19417"/>
<dbReference type="FunCoup" id="Q19417">
    <property type="interactions" value="14"/>
</dbReference>
<dbReference type="STRING" id="6239.F13G3.3a.1"/>
<dbReference type="PaxDb" id="6239-F13G3.3a"/>
<dbReference type="EnsemblMetazoa" id="F13G3.3a.1">
    <property type="protein sequence ID" value="F13G3.3a.1"/>
    <property type="gene ID" value="WBGene00008763"/>
</dbReference>
<dbReference type="GeneID" id="172475"/>
<dbReference type="KEGG" id="cel:CELE_F13G3.3"/>
<dbReference type="UCSC" id="F13G3.3">
    <property type="organism name" value="c. elegans"/>
</dbReference>
<dbReference type="AGR" id="WB:WBGene00008763"/>
<dbReference type="CTD" id="172475"/>
<dbReference type="WormBase" id="F13G3.3a">
    <property type="protein sequence ID" value="CE27124"/>
    <property type="gene ID" value="WBGene00008763"/>
</dbReference>
<dbReference type="eggNOG" id="KOG4735">
    <property type="taxonomic scope" value="Eukaryota"/>
</dbReference>
<dbReference type="GeneTree" id="ENSGT00970000195836"/>
<dbReference type="HOGENOM" id="CLU_028496_1_0_1"/>
<dbReference type="InParanoid" id="Q19417"/>
<dbReference type="OMA" id="NVEFRSQ"/>
<dbReference type="OrthoDB" id="5809216at2759"/>
<dbReference type="PhylomeDB" id="Q19417"/>
<dbReference type="PRO" id="PR:Q19417"/>
<dbReference type="Proteomes" id="UP000001940">
    <property type="component" value="Chromosome I"/>
</dbReference>
<dbReference type="Bgee" id="WBGene00008763">
    <property type="expression patterns" value="Expressed in embryo and 2 other cell types or tissues"/>
</dbReference>
<dbReference type="ExpressionAtlas" id="Q19417">
    <property type="expression patterns" value="baseline and differential"/>
</dbReference>
<dbReference type="GO" id="GO:0016020">
    <property type="term" value="C:membrane"/>
    <property type="evidence" value="ECO:0007669"/>
    <property type="project" value="UniProtKB-SubCell"/>
</dbReference>
<dbReference type="GO" id="GO:0016757">
    <property type="term" value="F:glycosyltransferase activity"/>
    <property type="evidence" value="ECO:0007669"/>
    <property type="project" value="UniProtKB-KW"/>
</dbReference>
<dbReference type="InterPro" id="IPR008166">
    <property type="entry name" value="Glyco_transf_92"/>
</dbReference>
<dbReference type="InterPro" id="IPR052012">
    <property type="entry name" value="GTase_92"/>
</dbReference>
<dbReference type="PANTHER" id="PTHR21645">
    <property type="entry name" value="GLYCOSYLTRANSFERASE FAMILY 92 PROTEIN"/>
    <property type="match status" value="1"/>
</dbReference>
<dbReference type="PANTHER" id="PTHR21645:SF8">
    <property type="entry name" value="GLYCOSYLTRANSFERASE FAMILY 92 PROTEIN F13G3.3"/>
    <property type="match status" value="1"/>
</dbReference>
<dbReference type="Pfam" id="PF01697">
    <property type="entry name" value="Glyco_transf_92"/>
    <property type="match status" value="1"/>
</dbReference>
<sequence length="501" mass="57559">MLPRIIPSVLSVVLLFSFLFFVTAVLLQFIRIDSPDLENEEVFHSAPYDIFIYSAFYYNKSKSLGDSSMVILMTADFEVLEKVKNLELLGINDTSRAMTSAELERVTIHDACKWIAMTATAKIVLNPSLLLVSLGGNHAPIPFEVVSSEPKPVVMCISPLFAAENWHNLLVSLHVYKIFGAHMHLYIRSIVSPMLEILRVYEQEGYATLKPWNRINLLNRDEQDFNPNLNVEFRSQAAAQTDCLLRYKESSEFVAFVDLDDLIIPRVADNYASEFRYLASEHPTVAYFTYSKENTRIKAYKRANVFSIEHVLRNIKHEQQTETGKMIAIPSKINNTWIHWPQKNLKKLAVKPEFNSITHLKHIELLDGLKSKNEEEPKYNPSTGLDNDKPLISNKNIKMIEKDFNRMSWKSSVRRHLRNLPINMTYSKLISDCYKQSYYAFHSANENHGMLCPGPERCDISNHKTRCWISVGEYHSTRDGKLINVHFAENADFALNDGCQV</sequence>
<name>YSNK_CAEEL</name>
<evidence type="ECO:0000255" key="1"/>
<evidence type="ECO:0000305" key="2"/>
<keyword id="KW-0328">Glycosyltransferase</keyword>
<keyword id="KW-0472">Membrane</keyword>
<keyword id="KW-1185">Reference proteome</keyword>
<keyword id="KW-0808">Transferase</keyword>
<keyword id="KW-0812">Transmembrane</keyword>
<keyword id="KW-1133">Transmembrane helix</keyword>
<comment type="subcellular location">
    <subcellularLocation>
        <location evidence="2">Membrane</location>
        <topology evidence="2">Single-pass membrane protein</topology>
    </subcellularLocation>
</comment>
<comment type="similarity">
    <text evidence="2">Belongs to the glycosyltransferase 92 family.</text>
</comment>
<reference key="1">
    <citation type="journal article" date="1998" name="Science">
        <title>Genome sequence of the nematode C. elegans: a platform for investigating biology.</title>
        <authorList>
            <consortium name="The C. elegans sequencing consortium"/>
        </authorList>
    </citation>
    <scope>NUCLEOTIDE SEQUENCE [LARGE SCALE GENOMIC DNA]</scope>
    <source>
        <strain>Bristol N2</strain>
    </source>
</reference>
<organism>
    <name type="scientific">Caenorhabditis elegans</name>
    <dbReference type="NCBI Taxonomy" id="6239"/>
    <lineage>
        <taxon>Eukaryota</taxon>
        <taxon>Metazoa</taxon>
        <taxon>Ecdysozoa</taxon>
        <taxon>Nematoda</taxon>
        <taxon>Chromadorea</taxon>
        <taxon>Rhabditida</taxon>
        <taxon>Rhabditina</taxon>
        <taxon>Rhabditomorpha</taxon>
        <taxon>Rhabditoidea</taxon>
        <taxon>Rhabditidae</taxon>
        <taxon>Peloderinae</taxon>
        <taxon>Caenorhabditis</taxon>
    </lineage>
</organism>
<accession>Q19417</accession>
<gene>
    <name type="ORF">F13G3.3</name>
</gene>
<proteinExistence type="inferred from homology"/>
<protein>
    <recommendedName>
        <fullName>Glycosyltransferase family 92 protein F13G3.3</fullName>
        <ecNumber evidence="2">2.4.1.-</ecNumber>
    </recommendedName>
</protein>